<accession>A1V8A4</accession>
<feature type="chain" id="PRO_1000014999" description="Small ribosomal subunit protein uS10">
    <location>
        <begin position="1"/>
        <end position="103"/>
    </location>
</feature>
<name>RS10_BURMS</name>
<gene>
    <name evidence="1" type="primary">rpsJ</name>
    <name type="ordered locus">BMASAVP1_A3170</name>
</gene>
<proteinExistence type="inferred from homology"/>
<keyword id="KW-0687">Ribonucleoprotein</keyword>
<keyword id="KW-0689">Ribosomal protein</keyword>
<dbReference type="EMBL" id="CP000526">
    <property type="protein sequence ID" value="ABM50341.1"/>
    <property type="molecule type" value="Genomic_DNA"/>
</dbReference>
<dbReference type="RefSeq" id="WP_004199280.1">
    <property type="nucleotide sequence ID" value="NC_008785.1"/>
</dbReference>
<dbReference type="SMR" id="A1V8A4"/>
<dbReference type="GeneID" id="98107161"/>
<dbReference type="KEGG" id="bmv:BMASAVP1_A3170"/>
<dbReference type="HOGENOM" id="CLU_122625_1_3_4"/>
<dbReference type="GO" id="GO:1990904">
    <property type="term" value="C:ribonucleoprotein complex"/>
    <property type="evidence" value="ECO:0007669"/>
    <property type="project" value="UniProtKB-KW"/>
</dbReference>
<dbReference type="GO" id="GO:0005840">
    <property type="term" value="C:ribosome"/>
    <property type="evidence" value="ECO:0007669"/>
    <property type="project" value="UniProtKB-KW"/>
</dbReference>
<dbReference type="GO" id="GO:0003735">
    <property type="term" value="F:structural constituent of ribosome"/>
    <property type="evidence" value="ECO:0007669"/>
    <property type="project" value="InterPro"/>
</dbReference>
<dbReference type="GO" id="GO:0000049">
    <property type="term" value="F:tRNA binding"/>
    <property type="evidence" value="ECO:0007669"/>
    <property type="project" value="UniProtKB-UniRule"/>
</dbReference>
<dbReference type="GO" id="GO:0006412">
    <property type="term" value="P:translation"/>
    <property type="evidence" value="ECO:0007669"/>
    <property type="project" value="UniProtKB-UniRule"/>
</dbReference>
<dbReference type="FunFam" id="3.30.70.600:FF:000001">
    <property type="entry name" value="30S ribosomal protein S10"/>
    <property type="match status" value="1"/>
</dbReference>
<dbReference type="Gene3D" id="3.30.70.600">
    <property type="entry name" value="Ribosomal protein S10 domain"/>
    <property type="match status" value="1"/>
</dbReference>
<dbReference type="HAMAP" id="MF_00508">
    <property type="entry name" value="Ribosomal_uS10"/>
    <property type="match status" value="1"/>
</dbReference>
<dbReference type="InterPro" id="IPR001848">
    <property type="entry name" value="Ribosomal_uS10"/>
</dbReference>
<dbReference type="InterPro" id="IPR018268">
    <property type="entry name" value="Ribosomal_uS10_CS"/>
</dbReference>
<dbReference type="InterPro" id="IPR027486">
    <property type="entry name" value="Ribosomal_uS10_dom"/>
</dbReference>
<dbReference type="InterPro" id="IPR036838">
    <property type="entry name" value="Ribosomal_uS10_dom_sf"/>
</dbReference>
<dbReference type="NCBIfam" id="NF001861">
    <property type="entry name" value="PRK00596.1"/>
    <property type="match status" value="1"/>
</dbReference>
<dbReference type="NCBIfam" id="TIGR01049">
    <property type="entry name" value="rpsJ_bact"/>
    <property type="match status" value="1"/>
</dbReference>
<dbReference type="PANTHER" id="PTHR11700">
    <property type="entry name" value="30S RIBOSOMAL PROTEIN S10 FAMILY MEMBER"/>
    <property type="match status" value="1"/>
</dbReference>
<dbReference type="Pfam" id="PF00338">
    <property type="entry name" value="Ribosomal_S10"/>
    <property type="match status" value="1"/>
</dbReference>
<dbReference type="PRINTS" id="PR00971">
    <property type="entry name" value="RIBOSOMALS10"/>
</dbReference>
<dbReference type="SMART" id="SM01403">
    <property type="entry name" value="Ribosomal_S10"/>
    <property type="match status" value="1"/>
</dbReference>
<dbReference type="SUPFAM" id="SSF54999">
    <property type="entry name" value="Ribosomal protein S10"/>
    <property type="match status" value="1"/>
</dbReference>
<dbReference type="PROSITE" id="PS00361">
    <property type="entry name" value="RIBOSOMAL_S10"/>
    <property type="match status" value="1"/>
</dbReference>
<reference key="1">
    <citation type="journal article" date="2010" name="Genome Biol. Evol.">
        <title>Continuing evolution of Burkholderia mallei through genome reduction and large-scale rearrangements.</title>
        <authorList>
            <person name="Losada L."/>
            <person name="Ronning C.M."/>
            <person name="DeShazer D."/>
            <person name="Woods D."/>
            <person name="Fedorova N."/>
            <person name="Kim H.S."/>
            <person name="Shabalina S.A."/>
            <person name="Pearson T.R."/>
            <person name="Brinkac L."/>
            <person name="Tan P."/>
            <person name="Nandi T."/>
            <person name="Crabtree J."/>
            <person name="Badger J."/>
            <person name="Beckstrom-Sternberg S."/>
            <person name="Saqib M."/>
            <person name="Schutzer S.E."/>
            <person name="Keim P."/>
            <person name="Nierman W.C."/>
        </authorList>
    </citation>
    <scope>NUCLEOTIDE SEQUENCE [LARGE SCALE GENOMIC DNA]</scope>
    <source>
        <strain>SAVP1</strain>
    </source>
</reference>
<evidence type="ECO:0000255" key="1">
    <source>
        <dbReference type="HAMAP-Rule" id="MF_00508"/>
    </source>
</evidence>
<evidence type="ECO:0000305" key="2"/>
<comment type="function">
    <text evidence="1">Involved in the binding of tRNA to the ribosomes.</text>
</comment>
<comment type="subunit">
    <text evidence="1">Part of the 30S ribosomal subunit.</text>
</comment>
<comment type="similarity">
    <text evidence="1">Belongs to the universal ribosomal protein uS10 family.</text>
</comment>
<organism>
    <name type="scientific">Burkholderia mallei (strain SAVP1)</name>
    <dbReference type="NCBI Taxonomy" id="320388"/>
    <lineage>
        <taxon>Bacteria</taxon>
        <taxon>Pseudomonadati</taxon>
        <taxon>Pseudomonadota</taxon>
        <taxon>Betaproteobacteria</taxon>
        <taxon>Burkholderiales</taxon>
        <taxon>Burkholderiaceae</taxon>
        <taxon>Burkholderia</taxon>
        <taxon>pseudomallei group</taxon>
    </lineage>
</organism>
<sequence>MQQQKIRIRLKAFDYRLIDQSAAEIVDTAKRTGAIVRGPVPLPTRIQRFDILRSPHVNKTSRDQLEIRTHQRLMDIVDPTDKTVDALMKLDLPAGVDVEIKLQ</sequence>
<protein>
    <recommendedName>
        <fullName evidence="1">Small ribosomal subunit protein uS10</fullName>
    </recommendedName>
    <alternativeName>
        <fullName evidence="2">30S ribosomal protein S10</fullName>
    </alternativeName>
</protein>